<evidence type="ECO:0000250" key="1"/>
<evidence type="ECO:0000250" key="2">
    <source>
        <dbReference type="UniProtKB" id="Q98SP8"/>
    </source>
</evidence>
<evidence type="ECO:0000255" key="3">
    <source>
        <dbReference type="PROSITE-ProRule" id="PRU00176"/>
    </source>
</evidence>
<evidence type="ECO:0000255" key="4">
    <source>
        <dbReference type="PROSITE-ProRule" id="PRU00641"/>
    </source>
</evidence>
<evidence type="ECO:0000305" key="5"/>
<evidence type="ECO:0000312" key="6">
    <source>
        <dbReference type="EMBL" id="AAH71118.1"/>
    </source>
</evidence>
<organism>
    <name type="scientific">Xenopus laevis</name>
    <name type="common">African clawed frog</name>
    <dbReference type="NCBI Taxonomy" id="8355"/>
    <lineage>
        <taxon>Eukaryota</taxon>
        <taxon>Metazoa</taxon>
        <taxon>Chordata</taxon>
        <taxon>Craniata</taxon>
        <taxon>Vertebrata</taxon>
        <taxon>Euteleostomi</taxon>
        <taxon>Amphibia</taxon>
        <taxon>Batrachia</taxon>
        <taxon>Anura</taxon>
        <taxon>Pipoidea</taxon>
        <taxon>Pipidae</taxon>
        <taxon>Xenopodinae</taxon>
        <taxon>Xenopus</taxon>
        <taxon>Xenopus</taxon>
    </lineage>
</organism>
<proteinExistence type="evidence at transcript level"/>
<gene>
    <name type="primary">epabp-b</name>
</gene>
<keyword id="KW-0963">Cytoplasm</keyword>
<keyword id="KW-0507">mRNA processing</keyword>
<keyword id="KW-0648">Protein biosynthesis</keyword>
<keyword id="KW-1185">Reference proteome</keyword>
<keyword id="KW-0677">Repeat</keyword>
<keyword id="KW-0694">RNA-binding</keyword>
<name>EPABB_XENLA</name>
<feature type="chain" id="PRO_0000233955" description="Embryonic polyadenylate-binding protein B">
    <location>
        <begin position="1"/>
        <end position="629"/>
    </location>
</feature>
<feature type="domain" description="RRM 1" evidence="3">
    <location>
        <begin position="11"/>
        <end position="89"/>
    </location>
</feature>
<feature type="domain" description="RRM 2" evidence="3">
    <location>
        <begin position="99"/>
        <end position="175"/>
    </location>
</feature>
<feature type="domain" description="RRM 3" evidence="3">
    <location>
        <begin position="191"/>
        <end position="268"/>
    </location>
</feature>
<feature type="domain" description="RRM 4" evidence="3">
    <location>
        <begin position="294"/>
        <end position="370"/>
    </location>
</feature>
<feature type="domain" description="PABC" evidence="4">
    <location>
        <begin position="539"/>
        <end position="616"/>
    </location>
</feature>
<protein>
    <recommendedName>
        <fullName>Embryonic polyadenylate-binding protein B</fullName>
        <shortName>Embryonic poly(A)-binding protein B</shortName>
        <shortName>ePAB-B</shortName>
        <shortName>ePABP-B</shortName>
    </recommendedName>
    <alternativeName>
        <fullName>XePABP-B</fullName>
    </alternativeName>
</protein>
<accession>Q6GR16</accession>
<sequence>MNATRAEYPLASLYIGDLHPDVTEAMLYEKFSPAGPIMSIRVCRDIATRRSLGYAYINFQQPADAERALDTMNFEVIKGRPIRIMWSQRDPGLRKSGVGNVFIKNLDDSIDNKALYDTFSAFGDILSCKVVCDEYGSRGYGFVHFETQEAANRAIQTMNGMLLNDRKVFVGHFKSRRERELEYGAKVMEFTNVYIKNFGEDMDDKRLKEIFSAFGNTLSVKVMMDNSGRSRGFGFVNYGNHEEAQKAVTEMNGKEVNGRMVYVGRAQKRIERQGELKRKFEQIKQERINRYQGVNLYVKNLDDGIDDDRLRKEFSPYGTITSTKVMTEGGHSKGFGFVCFSSPEEATKAVTEMNGRIVSTKPLYVALAQRKEERKAILTNQYMQRLATMRAMPGPLLGSFQQPANYFLPTMPQPSNRAFYSPNPVAPVRPAPQWASHQSRPPQYQPPAPLMRAVPPRRMHSNISTMKQASTQVPRVPLQSQRVANIGTQTAGARAQVNASIMRAMPHYKYSCGVRNVQPIGSSAHLQQVLEPAVLMQGQEPLTASLLAAAPLQEQKQILGERIYPLIHEMHPTLAGKITGMLLEIDNSELLHMLESPESLHSKVEEAVAVLQAHQAKESAPKSAPQSLI</sequence>
<dbReference type="EMBL" id="BC071118">
    <property type="protein sequence ID" value="AAH71118.1"/>
    <property type="molecule type" value="mRNA"/>
</dbReference>
<dbReference type="RefSeq" id="NP_001085351.1">
    <property type="nucleotide sequence ID" value="NM_001091882.1"/>
</dbReference>
<dbReference type="SMR" id="Q6GR16"/>
<dbReference type="BioGRID" id="101940">
    <property type="interactions" value="2"/>
</dbReference>
<dbReference type="DNASU" id="443777"/>
<dbReference type="GeneID" id="443777"/>
<dbReference type="KEGG" id="xla:443777"/>
<dbReference type="AGR" id="Xenbase:XB-GENE-6251876"/>
<dbReference type="CTD" id="443777"/>
<dbReference type="Xenbase" id="XB-GENE-6251876">
    <property type="gene designation" value="pabpc1l.L"/>
</dbReference>
<dbReference type="OrthoDB" id="19742at2759"/>
<dbReference type="Proteomes" id="UP000186698">
    <property type="component" value="Chromosome 9_10L"/>
</dbReference>
<dbReference type="Bgee" id="443777">
    <property type="expression patterns" value="Expressed in oocyte and 14 other cell types or tissues"/>
</dbReference>
<dbReference type="GO" id="GO:0005737">
    <property type="term" value="C:cytoplasm"/>
    <property type="evidence" value="ECO:0000250"/>
    <property type="project" value="UniProtKB"/>
</dbReference>
<dbReference type="GO" id="GO:0010494">
    <property type="term" value="C:cytoplasmic stress granule"/>
    <property type="evidence" value="ECO:0000318"/>
    <property type="project" value="GO_Central"/>
</dbReference>
<dbReference type="GO" id="GO:0005829">
    <property type="term" value="C:cytosol"/>
    <property type="evidence" value="ECO:0000318"/>
    <property type="project" value="GO_Central"/>
</dbReference>
<dbReference type="GO" id="GO:0005634">
    <property type="term" value="C:nucleus"/>
    <property type="evidence" value="ECO:0000318"/>
    <property type="project" value="GO_Central"/>
</dbReference>
<dbReference type="GO" id="GO:1990904">
    <property type="term" value="C:ribonucleoprotein complex"/>
    <property type="evidence" value="ECO:0000318"/>
    <property type="project" value="GO_Central"/>
</dbReference>
<dbReference type="GO" id="GO:0031370">
    <property type="term" value="F:eukaryotic initiation factor 4G binding"/>
    <property type="evidence" value="ECO:0000250"/>
    <property type="project" value="UniProtKB"/>
</dbReference>
<dbReference type="GO" id="GO:0003730">
    <property type="term" value="F:mRNA 3'-UTR binding"/>
    <property type="evidence" value="ECO:0000318"/>
    <property type="project" value="GO_Central"/>
</dbReference>
<dbReference type="GO" id="GO:0008143">
    <property type="term" value="F:poly(A) binding"/>
    <property type="evidence" value="ECO:0000250"/>
    <property type="project" value="UniProtKB"/>
</dbReference>
<dbReference type="GO" id="GO:0008266">
    <property type="term" value="F:poly(U) RNA binding"/>
    <property type="evidence" value="ECO:0000318"/>
    <property type="project" value="GO_Central"/>
</dbReference>
<dbReference type="GO" id="GO:0043009">
    <property type="term" value="P:chordate embryonic development"/>
    <property type="evidence" value="ECO:0000250"/>
    <property type="project" value="UniProtKB"/>
</dbReference>
<dbReference type="GO" id="GO:0006397">
    <property type="term" value="P:mRNA processing"/>
    <property type="evidence" value="ECO:0007669"/>
    <property type="project" value="UniProtKB-KW"/>
</dbReference>
<dbReference type="GO" id="GO:0048255">
    <property type="term" value="P:mRNA stabilization"/>
    <property type="evidence" value="ECO:0000250"/>
    <property type="project" value="UniProtKB"/>
</dbReference>
<dbReference type="GO" id="GO:0060212">
    <property type="term" value="P:negative regulation of nuclear-transcribed mRNA poly(A) tail shortening"/>
    <property type="evidence" value="ECO:0000250"/>
    <property type="project" value="UniProtKB"/>
</dbReference>
<dbReference type="GO" id="GO:0006412">
    <property type="term" value="P:translation"/>
    <property type="evidence" value="ECO:0007669"/>
    <property type="project" value="UniProtKB-KW"/>
</dbReference>
<dbReference type="CDD" id="cd12378">
    <property type="entry name" value="RRM1_I_PABPs"/>
    <property type="match status" value="1"/>
</dbReference>
<dbReference type="CDD" id="cd12379">
    <property type="entry name" value="RRM2_I_PABPs"/>
    <property type="match status" value="1"/>
</dbReference>
<dbReference type="CDD" id="cd12380">
    <property type="entry name" value="RRM3_I_PABPs"/>
    <property type="match status" value="1"/>
</dbReference>
<dbReference type="CDD" id="cd12381">
    <property type="entry name" value="RRM4_I_PABPs"/>
    <property type="match status" value="1"/>
</dbReference>
<dbReference type="FunFam" id="1.10.1900.10:FF:000001">
    <property type="entry name" value="Polyadenylate-binding protein"/>
    <property type="match status" value="1"/>
</dbReference>
<dbReference type="FunFam" id="3.30.70.330:FF:000003">
    <property type="entry name" value="Polyadenylate-binding protein"/>
    <property type="match status" value="1"/>
</dbReference>
<dbReference type="FunFam" id="3.30.70.330:FF:000021">
    <property type="entry name" value="Polyadenylate-binding protein"/>
    <property type="match status" value="1"/>
</dbReference>
<dbReference type="FunFam" id="3.30.70.330:FF:000042">
    <property type="entry name" value="Polyadenylate-binding protein"/>
    <property type="match status" value="1"/>
</dbReference>
<dbReference type="FunFam" id="3.30.70.330:FF:000049">
    <property type="entry name" value="Polyadenylate-binding protein"/>
    <property type="match status" value="1"/>
</dbReference>
<dbReference type="Gene3D" id="3.30.70.330">
    <property type="match status" value="4"/>
</dbReference>
<dbReference type="Gene3D" id="1.10.1900.10">
    <property type="entry name" value="c-terminal domain of poly(a) binding protein"/>
    <property type="match status" value="1"/>
</dbReference>
<dbReference type="InterPro" id="IPR012677">
    <property type="entry name" value="Nucleotide-bd_a/b_plait_sf"/>
</dbReference>
<dbReference type="InterPro" id="IPR036053">
    <property type="entry name" value="PABP-dom"/>
</dbReference>
<dbReference type="InterPro" id="IPR006515">
    <property type="entry name" value="PABP_1234"/>
</dbReference>
<dbReference type="InterPro" id="IPR002004">
    <property type="entry name" value="PABP_HYD_C"/>
</dbReference>
<dbReference type="InterPro" id="IPR034364">
    <property type="entry name" value="PABP_RRM1"/>
</dbReference>
<dbReference type="InterPro" id="IPR035979">
    <property type="entry name" value="RBD_domain_sf"/>
</dbReference>
<dbReference type="InterPro" id="IPR045305">
    <property type="entry name" value="RRM2_I_PABPs"/>
</dbReference>
<dbReference type="InterPro" id="IPR000504">
    <property type="entry name" value="RRM_dom"/>
</dbReference>
<dbReference type="InterPro" id="IPR003954">
    <property type="entry name" value="RRM_dom_euk"/>
</dbReference>
<dbReference type="NCBIfam" id="TIGR01628">
    <property type="entry name" value="PABP-1234"/>
    <property type="match status" value="1"/>
</dbReference>
<dbReference type="PANTHER" id="PTHR24012">
    <property type="entry name" value="RNA BINDING PROTEIN"/>
    <property type="match status" value="1"/>
</dbReference>
<dbReference type="Pfam" id="PF00658">
    <property type="entry name" value="MLLE"/>
    <property type="match status" value="1"/>
</dbReference>
<dbReference type="Pfam" id="PF00076">
    <property type="entry name" value="RRM_1"/>
    <property type="match status" value="4"/>
</dbReference>
<dbReference type="SMART" id="SM00517">
    <property type="entry name" value="PolyA"/>
    <property type="match status" value="1"/>
</dbReference>
<dbReference type="SMART" id="SM00360">
    <property type="entry name" value="RRM"/>
    <property type="match status" value="4"/>
</dbReference>
<dbReference type="SMART" id="SM00361">
    <property type="entry name" value="RRM_1"/>
    <property type="match status" value="3"/>
</dbReference>
<dbReference type="SUPFAM" id="SSF63570">
    <property type="entry name" value="PABC (PABP) domain"/>
    <property type="match status" value="1"/>
</dbReference>
<dbReference type="SUPFAM" id="SSF54928">
    <property type="entry name" value="RNA-binding domain, RBD"/>
    <property type="match status" value="2"/>
</dbReference>
<dbReference type="PROSITE" id="PS51309">
    <property type="entry name" value="PABC"/>
    <property type="match status" value="1"/>
</dbReference>
<dbReference type="PROSITE" id="PS50102">
    <property type="entry name" value="RRM"/>
    <property type="match status" value="4"/>
</dbReference>
<reference evidence="6" key="1">
    <citation type="submission" date="2004-05" db="EMBL/GenBank/DDBJ databases">
        <authorList>
            <consortium name="NIH - Xenopus Gene Collection (XGC) project"/>
        </authorList>
    </citation>
    <scope>NUCLEOTIDE SEQUENCE [LARGE SCALE MRNA]</scope>
    <source>
        <tissue evidence="6">Embryo</tissue>
    </source>
</reference>
<comment type="function">
    <text evidence="2">Binds and protects the poly(A) tail of mRNA with or without an AU-rich element (ARE) and prevents mRNA deadenylation. Stimulates the translation of mRNAs to which it is bound during early development (By similarity).</text>
</comment>
<comment type="subunit">
    <text evidence="2">Interacts with dazl in an RNA-independent manner. The C-terminus can self-associate and also interact with the C-terminus of pabpc1, independently of RNA. RRM 1 and RRM 2 interact with both eif4g1 and paip1, and the C-terminus also interacts with paip1. Prior to oocyte maturation, found in a complex with dazl and pum2 proteins and spdy1 mRNA; pum2 dissociates from the complex during maturation. Interacts with the translation termination factor sup35/erf3 (By similarity).</text>
</comment>
<comment type="subcellular location">
    <subcellularLocation>
        <location evidence="1">Cytoplasm</location>
    </subcellularLocation>
    <text evidence="1">Associated with polysomes.</text>
</comment>
<comment type="similarity">
    <text evidence="5">Belongs to the polyadenylate-binding protein type-1 family.</text>
</comment>